<proteinExistence type="predicted"/>
<gene>
    <name type="ORF">K01B6.3</name>
</gene>
<keyword id="KW-1185">Reference proteome</keyword>
<feature type="chain" id="PRO_0000065393" description="Uncharacterized protein K01B6.3">
    <location>
        <begin position="1"/>
        <end position="410"/>
    </location>
</feature>
<feature type="region of interest" description="Disordered" evidence="1">
    <location>
        <begin position="310"/>
        <end position="333"/>
    </location>
</feature>
<feature type="compositionally biased region" description="Polar residues" evidence="1">
    <location>
        <begin position="310"/>
        <end position="325"/>
    </location>
</feature>
<evidence type="ECO:0000256" key="1">
    <source>
        <dbReference type="SAM" id="MobiDB-lite"/>
    </source>
</evidence>
<organism>
    <name type="scientific">Caenorhabditis elegans</name>
    <dbReference type="NCBI Taxonomy" id="6239"/>
    <lineage>
        <taxon>Eukaryota</taxon>
        <taxon>Metazoa</taxon>
        <taxon>Ecdysozoa</taxon>
        <taxon>Nematoda</taxon>
        <taxon>Chromadorea</taxon>
        <taxon>Rhabditida</taxon>
        <taxon>Rhabditina</taxon>
        <taxon>Rhabditomorpha</taxon>
        <taxon>Rhabditoidea</taxon>
        <taxon>Rhabditidae</taxon>
        <taxon>Peloderinae</taxon>
        <taxon>Caenorhabditis</taxon>
    </lineage>
</organism>
<accession>P34491</accession>
<dbReference type="EMBL" id="Z22174">
    <property type="protein sequence ID" value="CAA80130.2"/>
    <property type="molecule type" value="Genomic_DNA"/>
</dbReference>
<dbReference type="PIR" id="S40761">
    <property type="entry name" value="S40761"/>
</dbReference>
<dbReference type="RefSeq" id="NP_499048.1">
    <property type="nucleotide sequence ID" value="NM_066647.5"/>
</dbReference>
<dbReference type="FunCoup" id="P34491">
    <property type="interactions" value="1537"/>
</dbReference>
<dbReference type="PaxDb" id="6239-K01B6.3"/>
<dbReference type="PeptideAtlas" id="P34491"/>
<dbReference type="EnsemblMetazoa" id="K01B6.3.1">
    <property type="protein sequence ID" value="K01B6.3.1"/>
    <property type="gene ID" value="WBGene00010454"/>
</dbReference>
<dbReference type="GeneID" id="176309"/>
<dbReference type="KEGG" id="cel:CELE_K01B6.3"/>
<dbReference type="UCSC" id="K01B6.3.2">
    <property type="organism name" value="c. elegans"/>
</dbReference>
<dbReference type="AGR" id="WB:WBGene00010454"/>
<dbReference type="CTD" id="176309"/>
<dbReference type="WormBase" id="K01B6.3">
    <property type="protein sequence ID" value="CE27190"/>
    <property type="gene ID" value="WBGene00010454"/>
</dbReference>
<dbReference type="eggNOG" id="ENOG502SEZ1">
    <property type="taxonomic scope" value="Eukaryota"/>
</dbReference>
<dbReference type="HOGENOM" id="CLU_056065_0_0_1"/>
<dbReference type="InParanoid" id="P34491"/>
<dbReference type="OMA" id="NSKWRYR"/>
<dbReference type="OrthoDB" id="5814630at2759"/>
<dbReference type="PRO" id="PR:P34491"/>
<dbReference type="Proteomes" id="UP000001940">
    <property type="component" value="Chromosome III"/>
</dbReference>
<dbReference type="Bgee" id="WBGene00010454">
    <property type="expression patterns" value="Expressed in larva and 2 other cell types or tissues"/>
</dbReference>
<name>YMM3_CAEEL</name>
<sequence length="410" mass="48180">MDDDFEEVGGRFRRFRRRLKKDWSQLWSDLSDPKQMRFPWPINTPLEVYEQVGAERFDPSSHRYQMPFFWKTLAVPGTPSWALLVCIIESTFALICFLAVMLHYAIFLPWCEVYSKPLMVFFLTALQYAIFYSFKVIFMISIVERNARLLRLQLFFQYATCVFLLLDAAFALAADFGGYNEELIYCNKNPLLIRFVAIISLIFLFVQMFLRIITVQVYNFMWDVRKFRKSLNNSKWRYRKRVHFTYCSIMQEDFKNERLQNKTKSVESRFRDGQEEILKQIQRKQNVTNISIAPDEPFDEAQLPQNARSISTLSTTPSNSATVSSPLGKRKHHTVSVSSKKMRDNEGKKVKVSRRKPGGIKVQLEVDYETARLLFSPKKNGRIPNVSVEEVDMEFDEDDDSHPEEHEPLV</sequence>
<protein>
    <recommendedName>
        <fullName>Uncharacterized protein K01B6.3</fullName>
    </recommendedName>
</protein>
<reference key="1">
    <citation type="journal article" date="1994" name="Nature">
        <title>2.2 Mb of contiguous nucleotide sequence from chromosome III of C. elegans.</title>
        <authorList>
            <person name="Wilson R."/>
            <person name="Ainscough R."/>
            <person name="Anderson K."/>
            <person name="Baynes C."/>
            <person name="Berks M."/>
            <person name="Bonfield J."/>
            <person name="Burton J."/>
            <person name="Connell M."/>
            <person name="Copsey T."/>
            <person name="Cooper J."/>
            <person name="Coulson A."/>
            <person name="Craxton M."/>
            <person name="Dear S."/>
            <person name="Du Z."/>
            <person name="Durbin R."/>
            <person name="Favello A."/>
            <person name="Fraser A."/>
            <person name="Fulton L."/>
            <person name="Gardner A."/>
            <person name="Green P."/>
            <person name="Hawkins T."/>
            <person name="Hillier L."/>
            <person name="Jier M."/>
            <person name="Johnston L."/>
            <person name="Jones M."/>
            <person name="Kershaw J."/>
            <person name="Kirsten J."/>
            <person name="Laisster N."/>
            <person name="Latreille P."/>
            <person name="Lightning J."/>
            <person name="Lloyd C."/>
            <person name="Mortimore B."/>
            <person name="O'Callaghan M."/>
            <person name="Parsons J."/>
            <person name="Percy C."/>
            <person name="Rifken L."/>
            <person name="Roopra A."/>
            <person name="Saunders D."/>
            <person name="Shownkeen R."/>
            <person name="Sims M."/>
            <person name="Smaldon N."/>
            <person name="Smith A."/>
            <person name="Smith M."/>
            <person name="Sonnhammer E."/>
            <person name="Staden R."/>
            <person name="Sulston J."/>
            <person name="Thierry-Mieg J."/>
            <person name="Thomas K."/>
            <person name="Vaudin M."/>
            <person name="Vaughan K."/>
            <person name="Waterston R."/>
            <person name="Watson A."/>
            <person name="Weinstock L."/>
            <person name="Wilkinson-Sproat J."/>
            <person name="Wohldman P."/>
        </authorList>
    </citation>
    <scope>NUCLEOTIDE SEQUENCE [LARGE SCALE GENOMIC DNA]</scope>
    <source>
        <strain>Bristol N2</strain>
    </source>
</reference>
<reference key="2">
    <citation type="journal article" date="1998" name="Science">
        <title>Genome sequence of the nematode C. elegans: a platform for investigating biology.</title>
        <authorList>
            <consortium name="The C. elegans sequencing consortium"/>
        </authorList>
    </citation>
    <scope>NUCLEOTIDE SEQUENCE [LARGE SCALE GENOMIC DNA]</scope>
    <source>
        <strain>Bristol N2</strain>
    </source>
</reference>